<feature type="chain" id="PRO_0000254040" description="Intraflagellar transport protein 43 homolog">
    <location>
        <begin position="1"/>
        <end position="207"/>
    </location>
</feature>
<feature type="region of interest" description="Disordered" evidence="2">
    <location>
        <begin position="1"/>
        <end position="97"/>
    </location>
</feature>
<feature type="compositionally biased region" description="Polar residues" evidence="2">
    <location>
        <begin position="28"/>
        <end position="46"/>
    </location>
</feature>
<feature type="compositionally biased region" description="Basic and acidic residues" evidence="2">
    <location>
        <begin position="75"/>
        <end position="95"/>
    </location>
</feature>
<feature type="modified residue" description="N-acetylmethionine" evidence="1">
    <location>
        <position position="1"/>
    </location>
</feature>
<feature type="modified residue" description="Phosphoserine" evidence="1">
    <location>
        <position position="77"/>
    </location>
</feature>
<evidence type="ECO:0000250" key="1">
    <source>
        <dbReference type="UniProtKB" id="Q96FT9"/>
    </source>
</evidence>
<evidence type="ECO:0000256" key="2">
    <source>
        <dbReference type="SAM" id="MobiDB-lite"/>
    </source>
</evidence>
<evidence type="ECO:0000305" key="3"/>
<gene>
    <name type="primary">IFT43</name>
</gene>
<organism>
    <name type="scientific">Bos taurus</name>
    <name type="common">Bovine</name>
    <dbReference type="NCBI Taxonomy" id="9913"/>
    <lineage>
        <taxon>Eukaryota</taxon>
        <taxon>Metazoa</taxon>
        <taxon>Chordata</taxon>
        <taxon>Craniata</taxon>
        <taxon>Vertebrata</taxon>
        <taxon>Euteleostomi</taxon>
        <taxon>Mammalia</taxon>
        <taxon>Eutheria</taxon>
        <taxon>Laurasiatheria</taxon>
        <taxon>Artiodactyla</taxon>
        <taxon>Ruminantia</taxon>
        <taxon>Pecora</taxon>
        <taxon>Bovidae</taxon>
        <taxon>Bovinae</taxon>
        <taxon>Bos</taxon>
    </lineage>
</organism>
<accession>Q2TBN9</accession>
<comment type="function">
    <text evidence="1">As a component of IFT complex A (IFT-A), a complex required for retrograde ciliary transport and entry into cilia of G protein-coupled receptors (GPCRs), it is involved in ciliogenesis. Involved in retrograde ciliary transport along microtubules from the ciliary tip to the base.</text>
</comment>
<comment type="subunit">
    <text evidence="1">Component of the IFT complex A (IFT-A) complex. IFT-A complex is divided into a core subcomplex composed of IFT122:IFT140:WDR19 which is associated with TULP3 and a peripheral subcomplex composed of IFT43:WDR35:TTC21B. Interacts directy with IFT122, WDR35 and TTC21B.</text>
</comment>
<comment type="subcellular location">
    <subcellularLocation>
        <location evidence="1">Cytoplasm</location>
        <location evidence="1">Cytoskeleton</location>
    </subcellularLocation>
    <subcellularLocation>
        <location evidence="1">Cell projection</location>
        <location evidence="1">Cilium</location>
    </subcellularLocation>
    <text evidence="1">Associated with microtubules. Localized at the distal tip of the cilium.</text>
</comment>
<comment type="similarity">
    <text evidence="3">Belongs to the IFT43 family.</text>
</comment>
<protein>
    <recommendedName>
        <fullName>Intraflagellar transport protein 43 homolog</fullName>
    </recommendedName>
</protein>
<name>IFT43_BOVIN</name>
<keyword id="KW-0007">Acetylation</keyword>
<keyword id="KW-0966">Cell projection</keyword>
<keyword id="KW-0970">Cilium biogenesis/degradation</keyword>
<keyword id="KW-0963">Cytoplasm</keyword>
<keyword id="KW-0206">Cytoskeleton</keyword>
<keyword id="KW-0597">Phosphoprotein</keyword>
<keyword id="KW-1185">Reference proteome</keyword>
<proteinExistence type="evidence at transcript level"/>
<sequence length="207" mass="23440">MEDLLDLGEERRRCPATSGAKMGRRAQQESTQAENHLSGKNSSLTLTAEVPPPKPPRRQGRWAEASVKVSKSQRRASEEIQDHRLRQQSLDRSDDGGDIPVIPDLEEVQEEDFVLQVAAPPSIQVNRVMTYRDLDNDLMKYSAFQTLDGEIDLKLLTKVLAPEHEVREDDVSWDWDHLYTEVSSELLSEWDALQTEKEGPVGQPAHT</sequence>
<dbReference type="EMBL" id="BC109881">
    <property type="protein sequence ID" value="AAI09882.1"/>
    <property type="molecule type" value="mRNA"/>
</dbReference>
<dbReference type="RefSeq" id="NP_001035611.1">
    <property type="nucleotide sequence ID" value="NM_001040521.2"/>
</dbReference>
<dbReference type="SMR" id="Q2TBN9"/>
<dbReference type="FunCoup" id="Q2TBN9">
    <property type="interactions" value="554"/>
</dbReference>
<dbReference type="STRING" id="9913.ENSBTAP00000015927"/>
<dbReference type="PaxDb" id="9913-ENSBTAP00000015927"/>
<dbReference type="GeneID" id="513228"/>
<dbReference type="KEGG" id="bta:513228"/>
<dbReference type="CTD" id="112752"/>
<dbReference type="eggNOG" id="ENOG502RXJ2">
    <property type="taxonomic scope" value="Eukaryota"/>
</dbReference>
<dbReference type="InParanoid" id="Q2TBN9"/>
<dbReference type="OrthoDB" id="206950at2759"/>
<dbReference type="Proteomes" id="UP000009136">
    <property type="component" value="Unplaced"/>
</dbReference>
<dbReference type="GO" id="GO:0005929">
    <property type="term" value="C:cilium"/>
    <property type="evidence" value="ECO:0000250"/>
    <property type="project" value="UniProtKB"/>
</dbReference>
<dbReference type="GO" id="GO:0005737">
    <property type="term" value="C:cytoplasm"/>
    <property type="evidence" value="ECO:0007669"/>
    <property type="project" value="UniProtKB-KW"/>
</dbReference>
<dbReference type="GO" id="GO:0005856">
    <property type="term" value="C:cytoskeleton"/>
    <property type="evidence" value="ECO:0007669"/>
    <property type="project" value="UniProtKB-SubCell"/>
</dbReference>
<dbReference type="GO" id="GO:0030991">
    <property type="term" value="C:intraciliary transport particle A"/>
    <property type="evidence" value="ECO:0000250"/>
    <property type="project" value="UniProtKB"/>
</dbReference>
<dbReference type="GO" id="GO:0060271">
    <property type="term" value="P:cilium assembly"/>
    <property type="evidence" value="ECO:0000250"/>
    <property type="project" value="UniProtKB"/>
</dbReference>
<dbReference type="GO" id="GO:0035721">
    <property type="term" value="P:intraciliary retrograde transport"/>
    <property type="evidence" value="ECO:0000250"/>
    <property type="project" value="UniProtKB"/>
</dbReference>
<dbReference type="InterPro" id="IPR029302">
    <property type="entry name" value="IFT43"/>
</dbReference>
<dbReference type="PANTHER" id="PTHR33724">
    <property type="entry name" value="INTRAFLAGELLAR TRANSPORT PROTEIN 43 HOMOLOG"/>
    <property type="match status" value="1"/>
</dbReference>
<dbReference type="PANTHER" id="PTHR33724:SF1">
    <property type="entry name" value="INTRAFLAGELLAR TRANSPORT PROTEIN 43 HOMOLOG"/>
    <property type="match status" value="1"/>
</dbReference>
<dbReference type="Pfam" id="PF15305">
    <property type="entry name" value="IFT43"/>
    <property type="match status" value="1"/>
</dbReference>
<reference key="1">
    <citation type="submission" date="2005-11" db="EMBL/GenBank/DDBJ databases">
        <authorList>
            <consortium name="NIH - Mammalian Gene Collection (MGC) project"/>
        </authorList>
    </citation>
    <scope>NUCLEOTIDE SEQUENCE [LARGE SCALE MRNA]</scope>
    <source>
        <strain>Crossbred X Angus</strain>
        <tissue>Liver</tissue>
    </source>
</reference>